<gene>
    <name evidence="1" type="primary">katG</name>
    <name type="ordered locus">XCV1350</name>
</gene>
<proteinExistence type="inferred from homology"/>
<organism>
    <name type="scientific">Xanthomonas euvesicatoria pv. vesicatoria (strain 85-10)</name>
    <name type="common">Xanthomonas campestris pv. vesicatoria</name>
    <dbReference type="NCBI Taxonomy" id="316273"/>
    <lineage>
        <taxon>Bacteria</taxon>
        <taxon>Pseudomonadati</taxon>
        <taxon>Pseudomonadota</taxon>
        <taxon>Gammaproteobacteria</taxon>
        <taxon>Lysobacterales</taxon>
        <taxon>Lysobacteraceae</taxon>
        <taxon>Xanthomonas</taxon>
    </lineage>
</organism>
<reference key="1">
    <citation type="journal article" date="2005" name="J. Bacteriol.">
        <title>Insights into genome plasticity and pathogenicity of the plant pathogenic Bacterium Xanthomonas campestris pv. vesicatoria revealed by the complete genome sequence.</title>
        <authorList>
            <person name="Thieme F."/>
            <person name="Koebnik R."/>
            <person name="Bekel T."/>
            <person name="Berger C."/>
            <person name="Boch J."/>
            <person name="Buettner D."/>
            <person name="Caldana C."/>
            <person name="Gaigalat L."/>
            <person name="Goesmann A."/>
            <person name="Kay S."/>
            <person name="Kirchner O."/>
            <person name="Lanz C."/>
            <person name="Linke B."/>
            <person name="McHardy A.C."/>
            <person name="Meyer F."/>
            <person name="Mittenhuber G."/>
            <person name="Nies D.H."/>
            <person name="Niesbach-Kloesgen U."/>
            <person name="Patschkowski T."/>
            <person name="Rueckert C."/>
            <person name="Rupp O."/>
            <person name="Schneiker S."/>
            <person name="Schuster S.C."/>
            <person name="Vorhoelter F.J."/>
            <person name="Weber E."/>
            <person name="Puehler A."/>
            <person name="Bonas U."/>
            <person name="Bartels D."/>
            <person name="Kaiser O."/>
        </authorList>
    </citation>
    <scope>NUCLEOTIDE SEQUENCE [LARGE SCALE GENOMIC DNA]</scope>
    <source>
        <strain>85-10</strain>
    </source>
</reference>
<feature type="chain" id="PRO_0000354958" description="Catalase-peroxidase">
    <location>
        <begin position="1"/>
        <end position="748"/>
    </location>
</feature>
<feature type="active site" description="Proton acceptor" evidence="1">
    <location>
        <position position="93"/>
    </location>
</feature>
<feature type="binding site" description="axial binding residue" evidence="1">
    <location>
        <position position="279"/>
    </location>
    <ligand>
        <name>heme b</name>
        <dbReference type="ChEBI" id="CHEBI:60344"/>
    </ligand>
    <ligandPart>
        <name>Fe</name>
        <dbReference type="ChEBI" id="CHEBI:18248"/>
    </ligandPart>
</feature>
<feature type="site" description="Transition state stabilizer" evidence="1">
    <location>
        <position position="89"/>
    </location>
</feature>
<feature type="cross-link" description="Tryptophyl-tyrosyl-methioninium (Trp-Tyr) (with M-264)" evidence="1">
    <location>
        <begin position="92"/>
        <end position="238"/>
    </location>
</feature>
<feature type="cross-link" description="Tryptophyl-tyrosyl-methioninium (Tyr-Met) (with W-92)" evidence="1">
    <location>
        <begin position="238"/>
        <end position="264"/>
    </location>
</feature>
<evidence type="ECO:0000255" key="1">
    <source>
        <dbReference type="HAMAP-Rule" id="MF_01961"/>
    </source>
</evidence>
<dbReference type="EC" id="1.11.1.21" evidence="1"/>
<dbReference type="EMBL" id="AM039952">
    <property type="protein sequence ID" value="CAJ22981.1"/>
    <property type="molecule type" value="Genomic_DNA"/>
</dbReference>
<dbReference type="RefSeq" id="WP_011346796.1">
    <property type="nucleotide sequence ID" value="NZ_CP017190.1"/>
</dbReference>
<dbReference type="SMR" id="Q3BVY2"/>
<dbReference type="STRING" id="456327.BJD11_15930"/>
<dbReference type="PeroxiBase" id="2703">
    <property type="entry name" value="XeuCP01_85-10"/>
</dbReference>
<dbReference type="KEGG" id="xcv:XCV1350"/>
<dbReference type="eggNOG" id="COG0376">
    <property type="taxonomic scope" value="Bacteria"/>
</dbReference>
<dbReference type="HOGENOM" id="CLU_025424_2_0_6"/>
<dbReference type="Proteomes" id="UP000007069">
    <property type="component" value="Chromosome"/>
</dbReference>
<dbReference type="GO" id="GO:0005829">
    <property type="term" value="C:cytosol"/>
    <property type="evidence" value="ECO:0007669"/>
    <property type="project" value="TreeGrafter"/>
</dbReference>
<dbReference type="GO" id="GO:0004096">
    <property type="term" value="F:catalase activity"/>
    <property type="evidence" value="ECO:0007669"/>
    <property type="project" value="UniProtKB-UniRule"/>
</dbReference>
<dbReference type="GO" id="GO:0020037">
    <property type="term" value="F:heme binding"/>
    <property type="evidence" value="ECO:0007669"/>
    <property type="project" value="InterPro"/>
</dbReference>
<dbReference type="GO" id="GO:0046872">
    <property type="term" value="F:metal ion binding"/>
    <property type="evidence" value="ECO:0007669"/>
    <property type="project" value="UniProtKB-KW"/>
</dbReference>
<dbReference type="GO" id="GO:0070301">
    <property type="term" value="P:cellular response to hydrogen peroxide"/>
    <property type="evidence" value="ECO:0007669"/>
    <property type="project" value="TreeGrafter"/>
</dbReference>
<dbReference type="GO" id="GO:0042744">
    <property type="term" value="P:hydrogen peroxide catabolic process"/>
    <property type="evidence" value="ECO:0007669"/>
    <property type="project" value="UniProtKB-KW"/>
</dbReference>
<dbReference type="CDD" id="cd00649">
    <property type="entry name" value="catalase_peroxidase_1"/>
    <property type="match status" value="1"/>
</dbReference>
<dbReference type="CDD" id="cd08200">
    <property type="entry name" value="catalase_peroxidase_2"/>
    <property type="match status" value="1"/>
</dbReference>
<dbReference type="FunFam" id="1.10.420.10:FF:000002">
    <property type="entry name" value="Catalase-peroxidase"/>
    <property type="match status" value="1"/>
</dbReference>
<dbReference type="FunFam" id="1.10.420.10:FF:000004">
    <property type="entry name" value="Catalase-peroxidase"/>
    <property type="match status" value="1"/>
</dbReference>
<dbReference type="FunFam" id="1.10.520.10:FF:000002">
    <property type="entry name" value="Catalase-peroxidase"/>
    <property type="match status" value="1"/>
</dbReference>
<dbReference type="FunFam" id="1.10.520.10:FF:000004">
    <property type="entry name" value="Catalase-peroxidase"/>
    <property type="match status" value="1"/>
</dbReference>
<dbReference type="Gene3D" id="1.10.520.10">
    <property type="match status" value="2"/>
</dbReference>
<dbReference type="Gene3D" id="1.10.420.10">
    <property type="entry name" value="Peroxidase, domain 2"/>
    <property type="match status" value="2"/>
</dbReference>
<dbReference type="HAMAP" id="MF_01961">
    <property type="entry name" value="Catal_peroxid"/>
    <property type="match status" value="1"/>
</dbReference>
<dbReference type="InterPro" id="IPR000763">
    <property type="entry name" value="Catalase_peroxidase"/>
</dbReference>
<dbReference type="InterPro" id="IPR002016">
    <property type="entry name" value="Haem_peroxidase"/>
</dbReference>
<dbReference type="InterPro" id="IPR010255">
    <property type="entry name" value="Haem_peroxidase_sf"/>
</dbReference>
<dbReference type="InterPro" id="IPR019794">
    <property type="entry name" value="Peroxidases_AS"/>
</dbReference>
<dbReference type="InterPro" id="IPR019793">
    <property type="entry name" value="Peroxidases_heam-ligand_BS"/>
</dbReference>
<dbReference type="NCBIfam" id="TIGR00198">
    <property type="entry name" value="cat_per_HPI"/>
    <property type="match status" value="1"/>
</dbReference>
<dbReference type="NCBIfam" id="NF011635">
    <property type="entry name" value="PRK15061.1"/>
    <property type="match status" value="1"/>
</dbReference>
<dbReference type="PANTHER" id="PTHR30555:SF0">
    <property type="entry name" value="CATALASE-PEROXIDASE"/>
    <property type="match status" value="1"/>
</dbReference>
<dbReference type="PANTHER" id="PTHR30555">
    <property type="entry name" value="HYDROPEROXIDASE I, BIFUNCTIONAL CATALASE-PEROXIDASE"/>
    <property type="match status" value="1"/>
</dbReference>
<dbReference type="Pfam" id="PF00141">
    <property type="entry name" value="peroxidase"/>
    <property type="match status" value="2"/>
</dbReference>
<dbReference type="PRINTS" id="PR00460">
    <property type="entry name" value="BPEROXIDASE"/>
</dbReference>
<dbReference type="PRINTS" id="PR00458">
    <property type="entry name" value="PEROXIDASE"/>
</dbReference>
<dbReference type="SUPFAM" id="SSF48113">
    <property type="entry name" value="Heme-dependent peroxidases"/>
    <property type="match status" value="2"/>
</dbReference>
<dbReference type="PROSITE" id="PS00435">
    <property type="entry name" value="PEROXIDASE_1"/>
    <property type="match status" value="1"/>
</dbReference>
<dbReference type="PROSITE" id="PS00436">
    <property type="entry name" value="PEROXIDASE_2"/>
    <property type="match status" value="1"/>
</dbReference>
<dbReference type="PROSITE" id="PS50873">
    <property type="entry name" value="PEROXIDASE_4"/>
    <property type="match status" value="1"/>
</dbReference>
<keyword id="KW-0349">Heme</keyword>
<keyword id="KW-0376">Hydrogen peroxide</keyword>
<keyword id="KW-0408">Iron</keyword>
<keyword id="KW-0479">Metal-binding</keyword>
<keyword id="KW-0560">Oxidoreductase</keyword>
<keyword id="KW-0575">Peroxidase</keyword>
<name>KATG_XANE5</name>
<accession>Q3BVY2</accession>
<sequence length="748" mass="82001">MTTEAKCPFNHAVVGTGTTNRDWWPKQLRVDLLSQHSSKSNPLGQSFNYADAFKRLDLQALKRDLHALMTDSQDWWPADFGHYGPLFVRMAWHSAGTYRIGDGRGGGGRGQQRFAPLNSWPDNVSLDKARRLLWPIKQKYGQAISWADLMILTGNVALESMGLKTFGFAGGREDTWEPDQDLYWGRETKWLGGDDRYSRGSPGVDEAHGVLVKDDDSQVPHTRDLENPLAAVQMGLIYVNPEGPDGNPDPIASARDIRDTFARMAMNDEETVALIAGGHTFGKTHGAGPADNVGAEPEAGELESQGLGWHNRYGSGKGADTITSGLEVTWTTTPAQWSNDYFDHLFGFEWELSKSPAGAHQWVAKNADAIIPDAHDASRKHRPTMLTTDLALRFDPAYEAISRRFQQHPEQFADAFARAWFKLTHRDMGPRSRYLGADVPAEELVWQDPVPAVDHPLVDAQDAAALKQTILASGLSVAHLVSTAWASATTFRGSDKRGGANGARIRLAPQKDWQANQPEQLAKVLATLERIQADFNAAQSGGKKISLADLIVLAGNAAVEHAAQAAGHQVTVPFAPGRTDASQQQTDVESFAVLEPVADGFRNFAKRRYAVPAEALLIDKAQLLTLTAPELTVLVGGLRVLGANVGDSKHGVFTSRPGVLSNDFFANLLDMRTEWKATSEAKDEYEGRDRSTGELRWTGTRVDLVFGSNSILRAVAEVYASADAQEKFVHDFVAAWTKVMQLDRFDLA</sequence>
<comment type="function">
    <text evidence="1">Bifunctional enzyme with both catalase and broad-spectrum peroxidase activity.</text>
</comment>
<comment type="catalytic activity">
    <reaction evidence="1">
        <text>H2O2 + AH2 = A + 2 H2O</text>
        <dbReference type="Rhea" id="RHEA:30275"/>
        <dbReference type="ChEBI" id="CHEBI:13193"/>
        <dbReference type="ChEBI" id="CHEBI:15377"/>
        <dbReference type="ChEBI" id="CHEBI:16240"/>
        <dbReference type="ChEBI" id="CHEBI:17499"/>
        <dbReference type="EC" id="1.11.1.21"/>
    </reaction>
</comment>
<comment type="catalytic activity">
    <reaction evidence="1">
        <text>2 H2O2 = O2 + 2 H2O</text>
        <dbReference type="Rhea" id="RHEA:20309"/>
        <dbReference type="ChEBI" id="CHEBI:15377"/>
        <dbReference type="ChEBI" id="CHEBI:15379"/>
        <dbReference type="ChEBI" id="CHEBI:16240"/>
        <dbReference type="EC" id="1.11.1.21"/>
    </reaction>
</comment>
<comment type="cofactor">
    <cofactor evidence="1">
        <name>heme b</name>
        <dbReference type="ChEBI" id="CHEBI:60344"/>
    </cofactor>
    <text evidence="1">Binds 1 heme b (iron(II)-protoporphyrin IX) group per dimer.</text>
</comment>
<comment type="subunit">
    <text evidence="1">Homodimer or homotetramer.</text>
</comment>
<comment type="PTM">
    <text evidence="1">Formation of the three residue Trp-Tyr-Met cross-link is important for the catalase, but not the peroxidase activity of the enzyme.</text>
</comment>
<comment type="similarity">
    <text evidence="1">Belongs to the peroxidase family. Peroxidase/catalase subfamily.</text>
</comment>
<protein>
    <recommendedName>
        <fullName evidence="1">Catalase-peroxidase</fullName>
        <shortName evidence="1">CP</shortName>
        <ecNumber evidence="1">1.11.1.21</ecNumber>
    </recommendedName>
    <alternativeName>
        <fullName evidence="1">Peroxidase/catalase</fullName>
    </alternativeName>
</protein>